<sequence>MVMSLERLPLQEYTKSAMNNLATSGPVIMTSLTEGSSLSKNSVGMGLGMKLPSIHSLINQKNSYNPFQTTLHSKSFSVGDPIKANNSKPLGVTLTSTDSNKRLNTSISALLTDNKSPGKANKPETEKETMNHLVQEDTVDKAHYTELSKKLQIRLQLAYYKYRTKQEHVKFNELKALHSSKPKKASKKNTKRRKLVVSHGNFKTPAKRKEHKLYTTNTHNLQDVSTDISMSSSTSSLMSKRDSSLQFHDSNDTTNDFTTPIRNANKRHLGQKQDTPMSVKAAKSLIFLYSSKV</sequence>
<organism>
    <name type="scientific">Candida glabrata (strain ATCC 2001 / BCRC 20586 / JCM 3761 / NBRC 0622 / NRRL Y-65 / CBS 138)</name>
    <name type="common">Yeast</name>
    <name type="synonym">Nakaseomyces glabratus</name>
    <dbReference type="NCBI Taxonomy" id="284593"/>
    <lineage>
        <taxon>Eukaryota</taxon>
        <taxon>Fungi</taxon>
        <taxon>Dikarya</taxon>
        <taxon>Ascomycota</taxon>
        <taxon>Saccharomycotina</taxon>
        <taxon>Saccharomycetes</taxon>
        <taxon>Saccharomycetales</taxon>
        <taxon>Saccharomycetaceae</taxon>
        <taxon>Nakaseomyces</taxon>
    </lineage>
</organism>
<keyword id="KW-0963">Cytoplasm</keyword>
<keyword id="KW-0539">Nucleus</keyword>
<keyword id="KW-1185">Reference proteome</keyword>
<keyword id="KW-0678">Repressor</keyword>
<keyword id="KW-0804">Transcription</keyword>
<keyword id="KW-0805">Transcription regulation</keyword>
<comment type="function">
    <text evidence="1">Negative regulatory component of the MBF complex involved in cell-cycle-dependent transcription.</text>
</comment>
<comment type="subunit">
    <text evidence="1">Component of the MBF complex.</text>
</comment>
<comment type="subcellular location">
    <subcellularLocation>
        <location evidence="1">Cytoplasm</location>
    </subcellularLocation>
    <subcellularLocation>
        <location evidence="1">Nucleus</location>
    </subcellularLocation>
</comment>
<comment type="similarity">
    <text evidence="3">Belongs to the WHI5/NRM1 family.</text>
</comment>
<dbReference type="EMBL" id="CR380955">
    <property type="protein sequence ID" value="CAG60437.1"/>
    <property type="molecule type" value="Genomic_DNA"/>
</dbReference>
<dbReference type="RefSeq" id="XP_447500.1">
    <property type="nucleotide sequence ID" value="XM_447500.1"/>
</dbReference>
<dbReference type="FunCoup" id="Q6FQJ4">
    <property type="interactions" value="95"/>
</dbReference>
<dbReference type="STRING" id="284593.Q6FQJ4"/>
<dbReference type="EnsemblFungi" id="CAGL0I05764g-T">
    <property type="protein sequence ID" value="CAGL0I05764g-T-p1"/>
    <property type="gene ID" value="CAGL0I05764g"/>
</dbReference>
<dbReference type="KEGG" id="cgr:2889344"/>
<dbReference type="CGD" id="CAL0129746">
    <property type="gene designation" value="CAGL0I05764g"/>
</dbReference>
<dbReference type="VEuPathDB" id="FungiDB:CAGL0I05764g"/>
<dbReference type="eggNOG" id="ENOG502S72A">
    <property type="taxonomic scope" value="Eukaryota"/>
</dbReference>
<dbReference type="HOGENOM" id="CLU_098759_0_0_1"/>
<dbReference type="InParanoid" id="Q6FQJ4"/>
<dbReference type="OMA" id="TIERNSC"/>
<dbReference type="Proteomes" id="UP000002428">
    <property type="component" value="Chromosome I"/>
</dbReference>
<dbReference type="GO" id="GO:0005737">
    <property type="term" value="C:cytoplasm"/>
    <property type="evidence" value="ECO:0007669"/>
    <property type="project" value="UniProtKB-SubCell"/>
</dbReference>
<dbReference type="GO" id="GO:0005634">
    <property type="term" value="C:nucleus"/>
    <property type="evidence" value="ECO:0007669"/>
    <property type="project" value="UniProtKB-SubCell"/>
</dbReference>
<dbReference type="InterPro" id="IPR013734">
    <property type="entry name" value="TF_Nrm1/Whi5"/>
</dbReference>
<dbReference type="Pfam" id="PF08528">
    <property type="entry name" value="Whi5"/>
    <property type="match status" value="1"/>
</dbReference>
<evidence type="ECO:0000250" key="1"/>
<evidence type="ECO:0000256" key="2">
    <source>
        <dbReference type="SAM" id="MobiDB-lite"/>
    </source>
</evidence>
<evidence type="ECO:0000305" key="3"/>
<feature type="chain" id="PRO_0000320391" description="Transcription factor NRM1">
    <location>
        <begin position="1"/>
        <end position="293"/>
    </location>
</feature>
<feature type="region of interest" description="Disordered" evidence="2">
    <location>
        <begin position="239"/>
        <end position="260"/>
    </location>
</feature>
<feature type="compositionally biased region" description="Polar residues" evidence="2">
    <location>
        <begin position="246"/>
        <end position="260"/>
    </location>
</feature>
<protein>
    <recommendedName>
        <fullName>Transcription factor NRM1</fullName>
    </recommendedName>
</protein>
<name>NRM1_CANGA</name>
<proteinExistence type="inferred from homology"/>
<reference key="1">
    <citation type="journal article" date="2004" name="Nature">
        <title>Genome evolution in yeasts.</title>
        <authorList>
            <person name="Dujon B."/>
            <person name="Sherman D."/>
            <person name="Fischer G."/>
            <person name="Durrens P."/>
            <person name="Casaregola S."/>
            <person name="Lafontaine I."/>
            <person name="de Montigny J."/>
            <person name="Marck C."/>
            <person name="Neuveglise C."/>
            <person name="Talla E."/>
            <person name="Goffard N."/>
            <person name="Frangeul L."/>
            <person name="Aigle M."/>
            <person name="Anthouard V."/>
            <person name="Babour A."/>
            <person name="Barbe V."/>
            <person name="Barnay S."/>
            <person name="Blanchin S."/>
            <person name="Beckerich J.-M."/>
            <person name="Beyne E."/>
            <person name="Bleykasten C."/>
            <person name="Boisrame A."/>
            <person name="Boyer J."/>
            <person name="Cattolico L."/>
            <person name="Confanioleri F."/>
            <person name="de Daruvar A."/>
            <person name="Despons L."/>
            <person name="Fabre E."/>
            <person name="Fairhead C."/>
            <person name="Ferry-Dumazet H."/>
            <person name="Groppi A."/>
            <person name="Hantraye F."/>
            <person name="Hennequin C."/>
            <person name="Jauniaux N."/>
            <person name="Joyet P."/>
            <person name="Kachouri R."/>
            <person name="Kerrest A."/>
            <person name="Koszul R."/>
            <person name="Lemaire M."/>
            <person name="Lesur I."/>
            <person name="Ma L."/>
            <person name="Muller H."/>
            <person name="Nicaud J.-M."/>
            <person name="Nikolski M."/>
            <person name="Oztas S."/>
            <person name="Ozier-Kalogeropoulos O."/>
            <person name="Pellenz S."/>
            <person name="Potier S."/>
            <person name="Richard G.-F."/>
            <person name="Straub M.-L."/>
            <person name="Suleau A."/>
            <person name="Swennen D."/>
            <person name="Tekaia F."/>
            <person name="Wesolowski-Louvel M."/>
            <person name="Westhof E."/>
            <person name="Wirth B."/>
            <person name="Zeniou-Meyer M."/>
            <person name="Zivanovic Y."/>
            <person name="Bolotin-Fukuhara M."/>
            <person name="Thierry A."/>
            <person name="Bouchier C."/>
            <person name="Caudron B."/>
            <person name="Scarpelli C."/>
            <person name="Gaillardin C."/>
            <person name="Weissenbach J."/>
            <person name="Wincker P."/>
            <person name="Souciet J.-L."/>
        </authorList>
    </citation>
    <scope>NUCLEOTIDE SEQUENCE [LARGE SCALE GENOMIC DNA]</scope>
    <source>
        <strain>ATCC 2001 / BCRC 20586 / JCM 3761 / NBRC 0622 / NRRL Y-65 / CBS 138</strain>
    </source>
</reference>
<accession>Q6FQJ4</accession>
<gene>
    <name type="primary">NRM1</name>
    <name type="ordered locus">CAGL0I05764g</name>
</gene>